<sequence length="154" mass="17926">MHCPFCGAHDTKVIDSRLVAEGDQVRRRRECLACGERFTTFETAELVMPRLIKQDGSRQPFDEDKLRAGMQRALEKRPVSVERLEAAIGHIKHQLRATGEREIKSRVLGELVMAELQKLDEVAYIRFASVYRRFQDLNEFREEIERLAREPAKE</sequence>
<reference key="1">
    <citation type="journal article" date="2009" name="Genome Res.">
        <title>Newly introduced genomic prophage islands are critical determinants of in vivo competitiveness in the Liverpool epidemic strain of Pseudomonas aeruginosa.</title>
        <authorList>
            <person name="Winstanley C."/>
            <person name="Langille M.G.I."/>
            <person name="Fothergill J.L."/>
            <person name="Kukavica-Ibrulj I."/>
            <person name="Paradis-Bleau C."/>
            <person name="Sanschagrin F."/>
            <person name="Thomson N.R."/>
            <person name="Winsor G.L."/>
            <person name="Quail M.A."/>
            <person name="Lennard N."/>
            <person name="Bignell A."/>
            <person name="Clarke L."/>
            <person name="Seeger K."/>
            <person name="Saunders D."/>
            <person name="Harris D."/>
            <person name="Parkhill J."/>
            <person name="Hancock R.E.W."/>
            <person name="Brinkman F.S.L."/>
            <person name="Levesque R.C."/>
        </authorList>
    </citation>
    <scope>NUCLEOTIDE SEQUENCE [LARGE SCALE GENOMIC DNA]</scope>
    <source>
        <strain>LESB58</strain>
    </source>
</reference>
<accession>B7V7Q1</accession>
<keyword id="KW-0067">ATP-binding</keyword>
<keyword id="KW-0238">DNA-binding</keyword>
<keyword id="KW-0479">Metal-binding</keyword>
<keyword id="KW-0547">Nucleotide-binding</keyword>
<keyword id="KW-0678">Repressor</keyword>
<keyword id="KW-0804">Transcription</keyword>
<keyword id="KW-0805">Transcription regulation</keyword>
<keyword id="KW-0862">Zinc</keyword>
<keyword id="KW-0863">Zinc-finger</keyword>
<proteinExistence type="inferred from homology"/>
<name>NRDR_PSEA8</name>
<feature type="chain" id="PRO_1000124533" description="Transcriptional repressor NrdR">
    <location>
        <begin position="1"/>
        <end position="154"/>
    </location>
</feature>
<feature type="domain" description="ATP-cone" evidence="1">
    <location>
        <begin position="49"/>
        <end position="139"/>
    </location>
</feature>
<feature type="zinc finger region" evidence="1">
    <location>
        <begin position="3"/>
        <end position="34"/>
    </location>
</feature>
<comment type="function">
    <text evidence="1">Negatively regulates transcription of bacterial ribonucleotide reductase nrd genes and operons by binding to NrdR-boxes.</text>
</comment>
<comment type="cofactor">
    <cofactor evidence="1">
        <name>Zn(2+)</name>
        <dbReference type="ChEBI" id="CHEBI:29105"/>
    </cofactor>
    <text evidence="1">Binds 1 zinc ion.</text>
</comment>
<comment type="similarity">
    <text evidence="1">Belongs to the NrdR family.</text>
</comment>
<protein>
    <recommendedName>
        <fullName evidence="1">Transcriptional repressor NrdR</fullName>
    </recommendedName>
</protein>
<gene>
    <name evidence="1" type="primary">nrdR</name>
    <name type="ordered locus">PLES_09191</name>
</gene>
<organism>
    <name type="scientific">Pseudomonas aeruginosa (strain LESB58)</name>
    <dbReference type="NCBI Taxonomy" id="557722"/>
    <lineage>
        <taxon>Bacteria</taxon>
        <taxon>Pseudomonadati</taxon>
        <taxon>Pseudomonadota</taxon>
        <taxon>Gammaproteobacteria</taxon>
        <taxon>Pseudomonadales</taxon>
        <taxon>Pseudomonadaceae</taxon>
        <taxon>Pseudomonas</taxon>
    </lineage>
</organism>
<evidence type="ECO:0000255" key="1">
    <source>
        <dbReference type="HAMAP-Rule" id="MF_00440"/>
    </source>
</evidence>
<dbReference type="EMBL" id="FM209186">
    <property type="protein sequence ID" value="CAW25646.1"/>
    <property type="molecule type" value="Genomic_DNA"/>
</dbReference>
<dbReference type="RefSeq" id="WP_003107181.1">
    <property type="nucleotide sequence ID" value="NC_011770.1"/>
</dbReference>
<dbReference type="SMR" id="B7V7Q1"/>
<dbReference type="GeneID" id="77219392"/>
<dbReference type="KEGG" id="pag:PLES_09191"/>
<dbReference type="HOGENOM" id="CLU_108412_0_0_6"/>
<dbReference type="GO" id="GO:0005524">
    <property type="term" value="F:ATP binding"/>
    <property type="evidence" value="ECO:0007669"/>
    <property type="project" value="UniProtKB-KW"/>
</dbReference>
<dbReference type="GO" id="GO:0003677">
    <property type="term" value="F:DNA binding"/>
    <property type="evidence" value="ECO:0007669"/>
    <property type="project" value="UniProtKB-KW"/>
</dbReference>
<dbReference type="GO" id="GO:0008270">
    <property type="term" value="F:zinc ion binding"/>
    <property type="evidence" value="ECO:0007669"/>
    <property type="project" value="UniProtKB-UniRule"/>
</dbReference>
<dbReference type="GO" id="GO:0045892">
    <property type="term" value="P:negative regulation of DNA-templated transcription"/>
    <property type="evidence" value="ECO:0007669"/>
    <property type="project" value="UniProtKB-UniRule"/>
</dbReference>
<dbReference type="HAMAP" id="MF_00440">
    <property type="entry name" value="NrdR"/>
    <property type="match status" value="1"/>
</dbReference>
<dbReference type="InterPro" id="IPR005144">
    <property type="entry name" value="ATP-cone_dom"/>
</dbReference>
<dbReference type="InterPro" id="IPR055173">
    <property type="entry name" value="NrdR-like_N"/>
</dbReference>
<dbReference type="InterPro" id="IPR003796">
    <property type="entry name" value="RNR_NrdR-like"/>
</dbReference>
<dbReference type="NCBIfam" id="TIGR00244">
    <property type="entry name" value="transcriptional regulator NrdR"/>
    <property type="match status" value="1"/>
</dbReference>
<dbReference type="PANTHER" id="PTHR30455">
    <property type="entry name" value="TRANSCRIPTIONAL REPRESSOR NRDR"/>
    <property type="match status" value="1"/>
</dbReference>
<dbReference type="PANTHER" id="PTHR30455:SF2">
    <property type="entry name" value="TRANSCRIPTIONAL REPRESSOR NRDR"/>
    <property type="match status" value="1"/>
</dbReference>
<dbReference type="Pfam" id="PF03477">
    <property type="entry name" value="ATP-cone"/>
    <property type="match status" value="1"/>
</dbReference>
<dbReference type="Pfam" id="PF22811">
    <property type="entry name" value="Zn_ribbon_NrdR"/>
    <property type="match status" value="1"/>
</dbReference>
<dbReference type="PROSITE" id="PS51161">
    <property type="entry name" value="ATP_CONE"/>
    <property type="match status" value="1"/>
</dbReference>